<name>PUR4_COLP3</name>
<protein>
    <recommendedName>
        <fullName evidence="1">Phosphoribosylformylglycinamidine synthase</fullName>
        <shortName evidence="1">FGAM synthase</shortName>
        <shortName evidence="1">FGAMS</shortName>
        <ecNumber evidence="1">6.3.5.3</ecNumber>
    </recommendedName>
    <alternativeName>
        <fullName evidence="1">Formylglycinamide ribonucleotide amidotransferase</fullName>
        <shortName evidence="1">FGAR amidotransferase</shortName>
        <shortName evidence="1">FGAR-AT</shortName>
    </alternativeName>
</protein>
<evidence type="ECO:0000255" key="1">
    <source>
        <dbReference type="HAMAP-Rule" id="MF_00419"/>
    </source>
</evidence>
<organism>
    <name type="scientific">Colwellia psychrerythraea (strain 34H / ATCC BAA-681)</name>
    <name type="common">Vibrio psychroerythus</name>
    <dbReference type="NCBI Taxonomy" id="167879"/>
    <lineage>
        <taxon>Bacteria</taxon>
        <taxon>Pseudomonadati</taxon>
        <taxon>Pseudomonadota</taxon>
        <taxon>Gammaproteobacteria</taxon>
        <taxon>Alteromonadales</taxon>
        <taxon>Colwelliaceae</taxon>
        <taxon>Colwellia</taxon>
    </lineage>
</organism>
<reference key="1">
    <citation type="journal article" date="2005" name="Proc. Natl. Acad. Sci. U.S.A.">
        <title>The psychrophilic lifestyle as revealed by the genome sequence of Colwellia psychrerythraea 34H through genomic and proteomic analyses.</title>
        <authorList>
            <person name="Methe B.A."/>
            <person name="Nelson K.E."/>
            <person name="Deming J.W."/>
            <person name="Momen B."/>
            <person name="Melamud E."/>
            <person name="Zhang X."/>
            <person name="Moult J."/>
            <person name="Madupu R."/>
            <person name="Nelson W.C."/>
            <person name="Dodson R.J."/>
            <person name="Brinkac L.M."/>
            <person name="Daugherty S.C."/>
            <person name="Durkin A.S."/>
            <person name="DeBoy R.T."/>
            <person name="Kolonay J.F."/>
            <person name="Sullivan S.A."/>
            <person name="Zhou L."/>
            <person name="Davidsen T.M."/>
            <person name="Wu M."/>
            <person name="Huston A.L."/>
            <person name="Lewis M."/>
            <person name="Weaver B."/>
            <person name="Weidman J.F."/>
            <person name="Khouri H."/>
            <person name="Utterback T.R."/>
            <person name="Feldblyum T.V."/>
            <person name="Fraser C.M."/>
        </authorList>
    </citation>
    <scope>NUCLEOTIDE SEQUENCE [LARGE SCALE GENOMIC DNA]</scope>
    <source>
        <strain>34H / ATCC BAA-681</strain>
    </source>
</reference>
<gene>
    <name evidence="1" type="primary">purL</name>
    <name type="ordered locus">CPS_3675</name>
</gene>
<dbReference type="EC" id="6.3.5.3" evidence="1"/>
<dbReference type="EMBL" id="CP000083">
    <property type="protein sequence ID" value="AAZ24314.1"/>
    <property type="molecule type" value="Genomic_DNA"/>
</dbReference>
<dbReference type="SMR" id="Q47XX7"/>
<dbReference type="STRING" id="167879.CPS_3675"/>
<dbReference type="KEGG" id="cps:CPS_3675"/>
<dbReference type="eggNOG" id="COG0046">
    <property type="taxonomic scope" value="Bacteria"/>
</dbReference>
<dbReference type="eggNOG" id="COG0047">
    <property type="taxonomic scope" value="Bacteria"/>
</dbReference>
<dbReference type="HOGENOM" id="CLU_001031_0_2_6"/>
<dbReference type="UniPathway" id="UPA00074">
    <property type="reaction ID" value="UER00128"/>
</dbReference>
<dbReference type="Proteomes" id="UP000000547">
    <property type="component" value="Chromosome"/>
</dbReference>
<dbReference type="GO" id="GO:0005737">
    <property type="term" value="C:cytoplasm"/>
    <property type="evidence" value="ECO:0007669"/>
    <property type="project" value="UniProtKB-SubCell"/>
</dbReference>
<dbReference type="GO" id="GO:0005524">
    <property type="term" value="F:ATP binding"/>
    <property type="evidence" value="ECO:0007669"/>
    <property type="project" value="UniProtKB-UniRule"/>
</dbReference>
<dbReference type="GO" id="GO:0046872">
    <property type="term" value="F:metal ion binding"/>
    <property type="evidence" value="ECO:0007669"/>
    <property type="project" value="UniProtKB-KW"/>
</dbReference>
<dbReference type="GO" id="GO:0004642">
    <property type="term" value="F:phosphoribosylformylglycinamidine synthase activity"/>
    <property type="evidence" value="ECO:0007669"/>
    <property type="project" value="UniProtKB-UniRule"/>
</dbReference>
<dbReference type="GO" id="GO:0006189">
    <property type="term" value="P:'de novo' IMP biosynthetic process"/>
    <property type="evidence" value="ECO:0007669"/>
    <property type="project" value="UniProtKB-UniRule"/>
</dbReference>
<dbReference type="CDD" id="cd01740">
    <property type="entry name" value="GATase1_FGAR_AT"/>
    <property type="match status" value="1"/>
</dbReference>
<dbReference type="CDD" id="cd02203">
    <property type="entry name" value="PurL_repeat1"/>
    <property type="match status" value="1"/>
</dbReference>
<dbReference type="CDD" id="cd02204">
    <property type="entry name" value="PurL_repeat2"/>
    <property type="match status" value="1"/>
</dbReference>
<dbReference type="FunFam" id="1.10.8.750:FF:000002">
    <property type="entry name" value="Phosphoribosylformylglycinamidine synthase"/>
    <property type="match status" value="1"/>
</dbReference>
<dbReference type="FunFam" id="3.30.1330.10:FF:000002">
    <property type="entry name" value="Phosphoribosylformylglycinamidine synthase"/>
    <property type="match status" value="1"/>
</dbReference>
<dbReference type="FunFam" id="3.30.1330.10:FF:000005">
    <property type="entry name" value="Phosphoribosylformylglycinamidine synthase"/>
    <property type="match status" value="1"/>
</dbReference>
<dbReference type="FunFam" id="3.40.50.880:FF:000008">
    <property type="entry name" value="Phosphoribosylformylglycinamidine synthase"/>
    <property type="match status" value="1"/>
</dbReference>
<dbReference type="FunFam" id="3.90.650.10:FF:000002">
    <property type="entry name" value="Phosphoribosylformylglycinamidine synthase"/>
    <property type="match status" value="1"/>
</dbReference>
<dbReference type="FunFam" id="3.90.650.10:FF:000005">
    <property type="entry name" value="Phosphoribosylformylglycinamidine synthase"/>
    <property type="match status" value="1"/>
</dbReference>
<dbReference type="Gene3D" id="3.40.50.880">
    <property type="match status" value="1"/>
</dbReference>
<dbReference type="Gene3D" id="1.10.8.750">
    <property type="entry name" value="Phosphoribosylformylglycinamidine synthase, linker domain"/>
    <property type="match status" value="1"/>
</dbReference>
<dbReference type="Gene3D" id="3.90.650.10">
    <property type="entry name" value="PurM-like C-terminal domain"/>
    <property type="match status" value="2"/>
</dbReference>
<dbReference type="Gene3D" id="3.30.1330.10">
    <property type="entry name" value="PurM-like, N-terminal domain"/>
    <property type="match status" value="2"/>
</dbReference>
<dbReference type="HAMAP" id="MF_00419">
    <property type="entry name" value="PurL_1"/>
    <property type="match status" value="1"/>
</dbReference>
<dbReference type="InterPro" id="IPR029062">
    <property type="entry name" value="Class_I_gatase-like"/>
</dbReference>
<dbReference type="InterPro" id="IPR040707">
    <property type="entry name" value="FGAR-AT_N"/>
</dbReference>
<dbReference type="InterPro" id="IPR055181">
    <property type="entry name" value="FGAR-AT_PurM_N-like"/>
</dbReference>
<dbReference type="InterPro" id="IPR010073">
    <property type="entry name" value="PurL_large"/>
</dbReference>
<dbReference type="InterPro" id="IPR041609">
    <property type="entry name" value="PurL_linker"/>
</dbReference>
<dbReference type="InterPro" id="IPR010918">
    <property type="entry name" value="PurM-like_C_dom"/>
</dbReference>
<dbReference type="InterPro" id="IPR036676">
    <property type="entry name" value="PurM-like_C_sf"/>
</dbReference>
<dbReference type="InterPro" id="IPR036921">
    <property type="entry name" value="PurM-like_N_sf"/>
</dbReference>
<dbReference type="InterPro" id="IPR036604">
    <property type="entry name" value="PurS-like_sf"/>
</dbReference>
<dbReference type="NCBIfam" id="TIGR01735">
    <property type="entry name" value="FGAM_synt"/>
    <property type="match status" value="1"/>
</dbReference>
<dbReference type="NCBIfam" id="NF003672">
    <property type="entry name" value="PRK05297.1"/>
    <property type="match status" value="1"/>
</dbReference>
<dbReference type="PANTHER" id="PTHR10099">
    <property type="entry name" value="PHOSPHORIBOSYLFORMYLGLYCINAMIDINE SYNTHASE"/>
    <property type="match status" value="1"/>
</dbReference>
<dbReference type="PANTHER" id="PTHR10099:SF1">
    <property type="entry name" value="PHOSPHORIBOSYLFORMYLGLYCINAMIDINE SYNTHASE"/>
    <property type="match status" value="1"/>
</dbReference>
<dbReference type="Pfam" id="PF02769">
    <property type="entry name" value="AIRS_C"/>
    <property type="match status" value="2"/>
</dbReference>
<dbReference type="Pfam" id="PF18072">
    <property type="entry name" value="FGAR-AT_linker"/>
    <property type="match status" value="1"/>
</dbReference>
<dbReference type="Pfam" id="PF18076">
    <property type="entry name" value="FGAR-AT_N"/>
    <property type="match status" value="1"/>
</dbReference>
<dbReference type="Pfam" id="PF22689">
    <property type="entry name" value="FGAR-AT_PurM_N-like"/>
    <property type="match status" value="1"/>
</dbReference>
<dbReference type="Pfam" id="PF13507">
    <property type="entry name" value="GATase_5"/>
    <property type="match status" value="1"/>
</dbReference>
<dbReference type="SMART" id="SM01211">
    <property type="entry name" value="GATase_5"/>
    <property type="match status" value="1"/>
</dbReference>
<dbReference type="SUPFAM" id="SSF52317">
    <property type="entry name" value="Class I glutamine amidotransferase-like"/>
    <property type="match status" value="1"/>
</dbReference>
<dbReference type="SUPFAM" id="SSF109736">
    <property type="entry name" value="FGAM synthase PurL, linker domain"/>
    <property type="match status" value="1"/>
</dbReference>
<dbReference type="SUPFAM" id="SSF56042">
    <property type="entry name" value="PurM C-terminal domain-like"/>
    <property type="match status" value="2"/>
</dbReference>
<dbReference type="SUPFAM" id="SSF55326">
    <property type="entry name" value="PurM N-terminal domain-like"/>
    <property type="match status" value="2"/>
</dbReference>
<dbReference type="SUPFAM" id="SSF82697">
    <property type="entry name" value="PurS-like"/>
    <property type="match status" value="1"/>
</dbReference>
<dbReference type="PROSITE" id="PS51273">
    <property type="entry name" value="GATASE_TYPE_1"/>
    <property type="match status" value="1"/>
</dbReference>
<accession>Q47XX7</accession>
<feature type="chain" id="PRO_0000264571" description="Phosphoribosylformylglycinamidine synthase">
    <location>
        <begin position="1"/>
        <end position="1320"/>
    </location>
</feature>
<feature type="domain" description="Glutamine amidotransferase type-1" evidence="1">
    <location>
        <begin position="1067"/>
        <end position="1320"/>
    </location>
</feature>
<feature type="active site" description="Nucleophile" evidence="1">
    <location>
        <position position="1160"/>
    </location>
</feature>
<feature type="active site" evidence="1">
    <location>
        <position position="1285"/>
    </location>
</feature>
<feature type="active site" evidence="1">
    <location>
        <position position="1287"/>
    </location>
</feature>
<feature type="binding site" evidence="1">
    <location>
        <begin position="310"/>
        <end position="321"/>
    </location>
    <ligand>
        <name>ATP</name>
        <dbReference type="ChEBI" id="CHEBI:30616"/>
    </ligand>
</feature>
<feature type="binding site" evidence="1">
    <location>
        <position position="686"/>
    </location>
    <ligand>
        <name>ATP</name>
        <dbReference type="ChEBI" id="CHEBI:30616"/>
    </ligand>
</feature>
<feature type="binding site" evidence="1">
    <location>
        <position position="687"/>
    </location>
    <ligand>
        <name>Mg(2+)</name>
        <dbReference type="ChEBI" id="CHEBI:18420"/>
    </ligand>
</feature>
<feature type="binding site" evidence="1">
    <location>
        <position position="726"/>
    </location>
    <ligand>
        <name>Mg(2+)</name>
        <dbReference type="ChEBI" id="CHEBI:18420"/>
    </ligand>
</feature>
<feature type="binding site" evidence="1">
    <location>
        <position position="730"/>
    </location>
    <ligand>
        <name>Mg(2+)</name>
        <dbReference type="ChEBI" id="CHEBI:18420"/>
    </ligand>
</feature>
<feature type="binding site" evidence="1">
    <location>
        <position position="894"/>
    </location>
    <ligand>
        <name>Mg(2+)</name>
        <dbReference type="ChEBI" id="CHEBI:18420"/>
    </ligand>
</feature>
<feature type="binding site" evidence="1">
    <location>
        <position position="896"/>
    </location>
    <ligand>
        <name>ATP</name>
        <dbReference type="ChEBI" id="CHEBI:30616"/>
    </ligand>
</feature>
<keyword id="KW-0067">ATP-binding</keyword>
<keyword id="KW-0963">Cytoplasm</keyword>
<keyword id="KW-0315">Glutamine amidotransferase</keyword>
<keyword id="KW-0436">Ligase</keyword>
<keyword id="KW-0460">Magnesium</keyword>
<keyword id="KW-0479">Metal-binding</keyword>
<keyword id="KW-0547">Nucleotide-binding</keyword>
<keyword id="KW-0658">Purine biosynthesis</keyword>
<sequence>MIKNLRGAPALSDFRVKKLLAQCEQLQLPVNDIYAEFAHFTKLNEELSTSEEKVLQQLLTYGPTIEEHQPAGLFLLVTPRPGTISPWSSKSTDIAHNCGLAKVERLERGIAYYVTLENDAQLSTSQEAQLNTLLHDRMMESIFNDFAQASTLFASSEPGELTAIDIESGGKNALVQANIELGLALAEDEVNYLFENFTKLGRNPHDIELYMFAQANSEHCRHKIFNAEWTIDGVKQEKSLFKMIRNTHEINPDYVLSAYKDNAAVMVGNKGGRFFPNPETNVYGYNHEDIQILMKVETHNHPTAISPYPGAATGSGGEIRDEGATGIGSKPKAGLVGFSVSNLRIPDFVQPWETDFGKPSRIVTAFDIMIEGPLGGAAFNNEFGRPAILGYFRTYEEEVNSFNGKEVRGYHKPIMLAGGLGNIRDEHVQKREIIVGANLIALGGPAMNIGLGGGAASSMASGQSAESLDFASVQRENPEMERRCQEVIDKCWQLGEENPIAFIHDVGAGGLSNAFPELVADGGRGGIFELRNVPNDERSMAPHEIWCNESQERYVIAVSDKNLATFEQICQRERAPYSVVGRATEEEHLTVTDSHFSDNEKLNTPIDLPLDVLLGKTPKIYKDVKTATAAGDSLDLSTVTLADAADRILSLPTVAEKTFLITIGDRSVTGMVNRDQMVGPWQVPVADCGVTASALDSYHGEAMSLGERTPVALLNFGASARLAVAESLTNIAGTDIGDLNRIKLSANWMSPAGHPGEDAGLYEAVKAIGEELCPALGLTIPVGKDSMSMKTQWEENGEQKSVTSPLSLVITAFGVVEDIRKTVTPELRTDKGDTRLVAIDLSKGKKRLGGSCLAQVYKQLGSETPDVDDAEVLKGFFNAMQTLVRAEKVIAYHDISDGGLFTTVTEMAFAGHTGVDIDISKLSNGANDDLATLFNEELGGVIQIRESDVDAIHAILAQHGILENCTDIGRLNNEDTIRFSRDGEVVLENSRTYYRTVWAQTTYRMQSLRDNPECAQQEHDVKFDTEDPGLNTELTFDINEDIVADLIIRDAVKDAENSANDITNPRVAILREQGVNSHVEMAAAFDRAGFVAIDVHMSDILSGRADLADFNGLVACGGFSYGDVLGAGEGWAKSILFNANARTMFKTFFEREDTFTLGVCNGCQMLSNLKDIIPGSEHWPHFVQNKSERFEARFSLVEIQESPSVLFKGMEGSRMPIAVSHGEGHAEFSSDAAIDAANNSGTVSMRYVNNYGDVTETYPANPNGSVDGITSLTTTDGRVTIMMPHPERVFRTVANSWHPDSWGEDSPWVRMFRNARAFIG</sequence>
<proteinExistence type="inferred from homology"/>
<comment type="function">
    <text evidence="1">Phosphoribosylformylglycinamidine synthase involved in the purines biosynthetic pathway. Catalyzes the ATP-dependent conversion of formylglycinamide ribonucleotide (FGAR) and glutamine to yield formylglycinamidine ribonucleotide (FGAM) and glutamate.</text>
</comment>
<comment type="catalytic activity">
    <reaction evidence="1">
        <text>N(2)-formyl-N(1)-(5-phospho-beta-D-ribosyl)glycinamide + L-glutamine + ATP + H2O = 2-formamido-N(1)-(5-O-phospho-beta-D-ribosyl)acetamidine + L-glutamate + ADP + phosphate + H(+)</text>
        <dbReference type="Rhea" id="RHEA:17129"/>
        <dbReference type="ChEBI" id="CHEBI:15377"/>
        <dbReference type="ChEBI" id="CHEBI:15378"/>
        <dbReference type="ChEBI" id="CHEBI:29985"/>
        <dbReference type="ChEBI" id="CHEBI:30616"/>
        <dbReference type="ChEBI" id="CHEBI:43474"/>
        <dbReference type="ChEBI" id="CHEBI:58359"/>
        <dbReference type="ChEBI" id="CHEBI:147286"/>
        <dbReference type="ChEBI" id="CHEBI:147287"/>
        <dbReference type="ChEBI" id="CHEBI:456216"/>
        <dbReference type="EC" id="6.3.5.3"/>
    </reaction>
</comment>
<comment type="pathway">
    <text evidence="1">Purine metabolism; IMP biosynthesis via de novo pathway; 5-amino-1-(5-phospho-D-ribosyl)imidazole from N(2)-formyl-N(1)-(5-phospho-D-ribosyl)glycinamide: step 1/2.</text>
</comment>
<comment type="subunit">
    <text evidence="1">Monomer.</text>
</comment>
<comment type="subcellular location">
    <subcellularLocation>
        <location evidence="1">Cytoplasm</location>
    </subcellularLocation>
</comment>
<comment type="similarity">
    <text evidence="1">In the N-terminal section; belongs to the FGAMS family.</text>
</comment>